<keyword id="KW-0002">3D-structure</keyword>
<keyword id="KW-0312">Gluconeogenesis</keyword>
<keyword id="KW-0324">Glycolysis</keyword>
<keyword id="KW-0413">Isomerase</keyword>
<keyword id="KW-1185">Reference proteome</keyword>
<accession>P9WIC9</accession>
<accession>L0T6M6</accession>
<accession>P0A5R6</accession>
<accession>Q11140</accession>
<gene>
    <name evidence="1" type="primary">gpmA</name>
    <name type="synonym">gpm</name>
    <name type="synonym">gpm1</name>
    <name type="synonym">pgm</name>
    <name type="ordered locus">Rv0489</name>
    <name type="ORF">MTCY20G9.15</name>
</gene>
<organism>
    <name type="scientific">Mycobacterium tuberculosis (strain ATCC 25618 / H37Rv)</name>
    <dbReference type="NCBI Taxonomy" id="83332"/>
    <lineage>
        <taxon>Bacteria</taxon>
        <taxon>Bacillati</taxon>
        <taxon>Actinomycetota</taxon>
        <taxon>Actinomycetes</taxon>
        <taxon>Mycobacteriales</taxon>
        <taxon>Mycobacteriaceae</taxon>
        <taxon>Mycobacterium</taxon>
        <taxon>Mycobacterium tuberculosis complex</taxon>
    </lineage>
</organism>
<protein>
    <recommendedName>
        <fullName evidence="1 3">2,3-bisphosphoglycerate-dependent phosphoglycerate mutase</fullName>
        <shortName evidence="1 3">BPG-dependent PGAM</shortName>
        <shortName evidence="1 3">PGAM</shortName>
        <shortName evidence="1 3">Phosphoglyceromutase</shortName>
        <shortName evidence="1">dPGM</shortName>
        <ecNumber evidence="1">5.4.2.11</ecNumber>
    </recommendedName>
</protein>
<comment type="function">
    <text evidence="1">Catalyzes the interconversion of 2-phosphoglycerate and 3-phosphoglycerate.</text>
</comment>
<comment type="catalytic activity">
    <reaction evidence="1">
        <text>(2R)-2-phosphoglycerate = (2R)-3-phosphoglycerate</text>
        <dbReference type="Rhea" id="RHEA:15901"/>
        <dbReference type="ChEBI" id="CHEBI:58272"/>
        <dbReference type="ChEBI" id="CHEBI:58289"/>
        <dbReference type="EC" id="5.4.2.11"/>
    </reaction>
</comment>
<comment type="pathway">
    <text evidence="1">Carbohydrate degradation; glycolysis; pyruvate from D-glyceraldehyde 3-phosphate: step 3/5.</text>
</comment>
<comment type="subunit">
    <text evidence="2">Homotetramer, dimer of dimers.</text>
</comment>
<comment type="similarity">
    <text evidence="1">Belongs to the phosphoglycerate mutase family. BPG-dependent PGAM subfamily.</text>
</comment>
<proteinExistence type="evidence at protein level"/>
<name>GPMA_MYCTU</name>
<feature type="chain" id="PRO_0000179893" description="2,3-bisphosphoglycerate-dependent phosphoglycerate mutase">
    <location>
        <begin position="1"/>
        <end position="249"/>
    </location>
</feature>
<feature type="active site" description="Tele-phosphohistidine intermediate" evidence="1">
    <location>
        <position position="12"/>
    </location>
</feature>
<feature type="active site" description="Proton donor/acceptor" evidence="1">
    <location>
        <position position="90"/>
    </location>
</feature>
<feature type="binding site" evidence="1 2">
    <location>
        <begin position="11"/>
        <end position="18"/>
    </location>
    <ligand>
        <name>substrate</name>
    </ligand>
</feature>
<feature type="binding site" evidence="1 2">
    <location>
        <begin position="24"/>
        <end position="25"/>
    </location>
    <ligand>
        <name>substrate</name>
    </ligand>
</feature>
<feature type="binding site" evidence="1 2">
    <location>
        <position position="63"/>
    </location>
    <ligand>
        <name>substrate</name>
    </ligand>
</feature>
<feature type="binding site" evidence="1 2">
    <location>
        <begin position="90"/>
        <end position="93"/>
    </location>
    <ligand>
        <name>substrate</name>
    </ligand>
</feature>
<feature type="binding site" evidence="1">
    <location>
        <position position="101"/>
    </location>
    <ligand>
        <name>substrate</name>
    </ligand>
</feature>
<feature type="binding site" evidence="1">
    <location>
        <begin position="117"/>
        <end position="118"/>
    </location>
    <ligand>
        <name>substrate</name>
    </ligand>
</feature>
<feature type="binding site" evidence="1">
    <location>
        <begin position="184"/>
        <end position="185"/>
    </location>
    <ligand>
        <name>substrate</name>
    </ligand>
</feature>
<feature type="site" description="Transition state stabilizer" evidence="1">
    <location>
        <position position="183"/>
    </location>
</feature>
<feature type="strand" evidence="4">
    <location>
        <begin position="6"/>
        <end position="11"/>
    </location>
</feature>
<feature type="helix" evidence="4">
    <location>
        <begin position="16"/>
        <end position="19"/>
    </location>
</feature>
<feature type="helix" evidence="4">
    <location>
        <begin position="33"/>
        <end position="48"/>
    </location>
</feature>
<feature type="strand" evidence="4">
    <location>
        <begin position="54"/>
        <end position="58"/>
    </location>
</feature>
<feature type="helix" evidence="4">
    <location>
        <begin position="62"/>
        <end position="75"/>
    </location>
</feature>
<feature type="strand" evidence="4">
    <location>
        <begin position="82"/>
        <end position="84"/>
    </location>
</feature>
<feature type="helix" evidence="4">
    <location>
        <begin position="86"/>
        <end position="88"/>
    </location>
</feature>
<feature type="helix" evidence="4">
    <location>
        <begin position="94"/>
        <end position="96"/>
    </location>
</feature>
<feature type="helix" evidence="4">
    <location>
        <begin position="101"/>
        <end position="108"/>
    </location>
</feature>
<feature type="helix" evidence="4">
    <location>
        <begin position="110"/>
        <end position="118"/>
    </location>
</feature>
<feature type="helix" evidence="4">
    <location>
        <begin position="139"/>
        <end position="144"/>
    </location>
</feature>
<feature type="helix" evidence="4">
    <location>
        <begin position="153"/>
        <end position="166"/>
    </location>
</feature>
<feature type="helix" evidence="4">
    <location>
        <begin position="168"/>
        <end position="173"/>
    </location>
</feature>
<feature type="strand" evidence="4">
    <location>
        <begin position="178"/>
        <end position="182"/>
    </location>
</feature>
<feature type="helix" evidence="4">
    <location>
        <begin position="184"/>
        <end position="194"/>
    </location>
</feature>
<feature type="helix" evidence="4">
    <location>
        <begin position="199"/>
        <end position="204"/>
    </location>
</feature>
<feature type="strand" evidence="4">
    <location>
        <begin position="213"/>
        <end position="217"/>
    </location>
</feature>
<feature type="strand" evidence="4">
    <location>
        <begin position="223"/>
        <end position="225"/>
    </location>
</feature>
<feature type="strand" evidence="4">
    <location>
        <begin position="229"/>
        <end position="232"/>
    </location>
</feature>
<feature type="helix" evidence="4">
    <location>
        <begin position="233"/>
        <end position="242"/>
    </location>
</feature>
<dbReference type="EC" id="5.4.2.11" evidence="1"/>
<dbReference type="EMBL" id="AL123456">
    <property type="protein sequence ID" value="CCP43223.1"/>
    <property type="molecule type" value="Genomic_DNA"/>
</dbReference>
<dbReference type="PIR" id="D70744">
    <property type="entry name" value="D70744"/>
</dbReference>
<dbReference type="RefSeq" id="WP_003402379.1">
    <property type="nucleotide sequence ID" value="NZ_NVQJ01000002.1"/>
</dbReference>
<dbReference type="RefSeq" id="YP_177731.1">
    <property type="nucleotide sequence ID" value="NC_000962.3"/>
</dbReference>
<dbReference type="PDB" id="1RII">
    <property type="method" value="X-ray"/>
    <property type="resolution" value="1.70 A"/>
    <property type="chains" value="A/B/C/D=1-249"/>
</dbReference>
<dbReference type="PDBsum" id="1RII"/>
<dbReference type="SMR" id="P9WIC9"/>
<dbReference type="FunCoup" id="P9WIC9">
    <property type="interactions" value="407"/>
</dbReference>
<dbReference type="STRING" id="83332.Rv0489"/>
<dbReference type="PaxDb" id="83332-Rv0489"/>
<dbReference type="DNASU" id="887183"/>
<dbReference type="GeneID" id="887183"/>
<dbReference type="KEGG" id="mtu:Rv0489"/>
<dbReference type="KEGG" id="mtv:RVBD_0489"/>
<dbReference type="TubercuList" id="Rv0489"/>
<dbReference type="eggNOG" id="COG0588">
    <property type="taxonomic scope" value="Bacteria"/>
</dbReference>
<dbReference type="InParanoid" id="P9WIC9"/>
<dbReference type="OrthoDB" id="9781415at2"/>
<dbReference type="PhylomeDB" id="P9WIC9"/>
<dbReference type="UniPathway" id="UPA00109">
    <property type="reaction ID" value="UER00186"/>
</dbReference>
<dbReference type="EvolutionaryTrace" id="P9WIC9"/>
<dbReference type="Proteomes" id="UP000001584">
    <property type="component" value="Chromosome"/>
</dbReference>
<dbReference type="GO" id="GO:0005886">
    <property type="term" value="C:plasma membrane"/>
    <property type="evidence" value="ECO:0007005"/>
    <property type="project" value="MTBBASE"/>
</dbReference>
<dbReference type="GO" id="GO:0032991">
    <property type="term" value="C:protein-containing complex"/>
    <property type="evidence" value="ECO:0000314"/>
    <property type="project" value="CAFA"/>
</dbReference>
<dbReference type="GO" id="GO:0042802">
    <property type="term" value="F:identical protein binding"/>
    <property type="evidence" value="ECO:0000314"/>
    <property type="project" value="CAFA"/>
</dbReference>
<dbReference type="GO" id="GO:0004619">
    <property type="term" value="F:phosphoglycerate mutase activity"/>
    <property type="evidence" value="ECO:0007669"/>
    <property type="project" value="UniProtKB-EC"/>
</dbReference>
<dbReference type="GO" id="GO:0006094">
    <property type="term" value="P:gluconeogenesis"/>
    <property type="evidence" value="ECO:0007669"/>
    <property type="project" value="UniProtKB-UniRule"/>
</dbReference>
<dbReference type="GO" id="GO:0006096">
    <property type="term" value="P:glycolytic process"/>
    <property type="evidence" value="ECO:0007669"/>
    <property type="project" value="UniProtKB-UniRule"/>
</dbReference>
<dbReference type="CDD" id="cd07067">
    <property type="entry name" value="HP_PGM_like"/>
    <property type="match status" value="1"/>
</dbReference>
<dbReference type="FunFam" id="3.40.50.1240:FF:000012">
    <property type="entry name" value="Phosphoglycerate mutase 1"/>
    <property type="match status" value="1"/>
</dbReference>
<dbReference type="Gene3D" id="3.40.50.1240">
    <property type="entry name" value="Phosphoglycerate mutase-like"/>
    <property type="match status" value="1"/>
</dbReference>
<dbReference type="HAMAP" id="MF_01039">
    <property type="entry name" value="PGAM_GpmA"/>
    <property type="match status" value="1"/>
</dbReference>
<dbReference type="InterPro" id="IPR013078">
    <property type="entry name" value="His_Pase_superF_clade-1"/>
</dbReference>
<dbReference type="InterPro" id="IPR029033">
    <property type="entry name" value="His_PPase_superfam"/>
</dbReference>
<dbReference type="InterPro" id="IPR001345">
    <property type="entry name" value="PG/BPGM_mutase_AS"/>
</dbReference>
<dbReference type="InterPro" id="IPR005952">
    <property type="entry name" value="Phosphogly_mut1"/>
</dbReference>
<dbReference type="NCBIfam" id="TIGR01258">
    <property type="entry name" value="pgm_1"/>
    <property type="match status" value="1"/>
</dbReference>
<dbReference type="NCBIfam" id="NF010713">
    <property type="entry name" value="PRK14115.1"/>
    <property type="match status" value="1"/>
</dbReference>
<dbReference type="NCBIfam" id="NF010718">
    <property type="entry name" value="PRK14120.1"/>
    <property type="match status" value="1"/>
</dbReference>
<dbReference type="PANTHER" id="PTHR11931">
    <property type="entry name" value="PHOSPHOGLYCERATE MUTASE"/>
    <property type="match status" value="1"/>
</dbReference>
<dbReference type="Pfam" id="PF00300">
    <property type="entry name" value="His_Phos_1"/>
    <property type="match status" value="1"/>
</dbReference>
<dbReference type="PIRSF" id="PIRSF000709">
    <property type="entry name" value="6PFK_2-Ptase"/>
    <property type="match status" value="1"/>
</dbReference>
<dbReference type="SMART" id="SM00855">
    <property type="entry name" value="PGAM"/>
    <property type="match status" value="1"/>
</dbReference>
<dbReference type="SUPFAM" id="SSF53254">
    <property type="entry name" value="Phosphoglycerate mutase-like"/>
    <property type="match status" value="1"/>
</dbReference>
<dbReference type="PROSITE" id="PS00175">
    <property type="entry name" value="PG_MUTASE"/>
    <property type="match status" value="1"/>
</dbReference>
<evidence type="ECO:0000255" key="1">
    <source>
        <dbReference type="HAMAP-Rule" id="MF_01039"/>
    </source>
</evidence>
<evidence type="ECO:0000269" key="2">
    <source>
    </source>
</evidence>
<evidence type="ECO:0000303" key="3">
    <source>
    </source>
</evidence>
<evidence type="ECO:0007829" key="4">
    <source>
        <dbReference type="PDB" id="1RII"/>
    </source>
</evidence>
<reference key="1">
    <citation type="journal article" date="1998" name="Nature">
        <title>Deciphering the biology of Mycobacterium tuberculosis from the complete genome sequence.</title>
        <authorList>
            <person name="Cole S.T."/>
            <person name="Brosch R."/>
            <person name="Parkhill J."/>
            <person name="Garnier T."/>
            <person name="Churcher C.M."/>
            <person name="Harris D.E."/>
            <person name="Gordon S.V."/>
            <person name="Eiglmeier K."/>
            <person name="Gas S."/>
            <person name="Barry C.E. III"/>
            <person name="Tekaia F."/>
            <person name="Badcock K."/>
            <person name="Basham D."/>
            <person name="Brown D."/>
            <person name="Chillingworth T."/>
            <person name="Connor R."/>
            <person name="Davies R.M."/>
            <person name="Devlin K."/>
            <person name="Feltwell T."/>
            <person name="Gentles S."/>
            <person name="Hamlin N."/>
            <person name="Holroyd S."/>
            <person name="Hornsby T."/>
            <person name="Jagels K."/>
            <person name="Krogh A."/>
            <person name="McLean J."/>
            <person name="Moule S."/>
            <person name="Murphy L.D."/>
            <person name="Oliver S."/>
            <person name="Osborne J."/>
            <person name="Quail M.A."/>
            <person name="Rajandream M.A."/>
            <person name="Rogers J."/>
            <person name="Rutter S."/>
            <person name="Seeger K."/>
            <person name="Skelton S."/>
            <person name="Squares S."/>
            <person name="Squares R."/>
            <person name="Sulston J.E."/>
            <person name="Taylor K."/>
            <person name="Whitehead S."/>
            <person name="Barrell B.G."/>
        </authorList>
    </citation>
    <scope>NUCLEOTIDE SEQUENCE [LARGE SCALE GENOMIC DNA]</scope>
    <source>
        <strain>ATCC 25618 / H37Rv</strain>
    </source>
</reference>
<reference key="2">
    <citation type="journal article" date="2011" name="Mol. Cell. Proteomics">
        <title>Proteogenomic analysis of Mycobacterium tuberculosis by high resolution mass spectrometry.</title>
        <authorList>
            <person name="Kelkar D.S."/>
            <person name="Kumar D."/>
            <person name="Kumar P."/>
            <person name="Balakrishnan L."/>
            <person name="Muthusamy B."/>
            <person name="Yadav A.K."/>
            <person name="Shrivastava P."/>
            <person name="Marimuthu A."/>
            <person name="Anand S."/>
            <person name="Sundaram H."/>
            <person name="Kingsbury R."/>
            <person name="Harsha H.C."/>
            <person name="Nair B."/>
            <person name="Prasad T.S."/>
            <person name="Chauhan D.S."/>
            <person name="Katoch K."/>
            <person name="Katoch V.M."/>
            <person name="Kumar P."/>
            <person name="Chaerkady R."/>
            <person name="Ramachandran S."/>
            <person name="Dash D."/>
            <person name="Pandey A."/>
        </authorList>
    </citation>
    <scope>IDENTIFICATION BY MASS SPECTROMETRY [LARGE SCALE ANALYSIS]</scope>
    <source>
        <strain>ATCC 25618 / H37Rv</strain>
    </source>
</reference>
<reference key="3">
    <citation type="journal article" date="2005" name="Acta Crystallogr. D">
        <title>The 1.70 angstroms X-ray crystal structure of Mycobacterium tuberculosis phosphoglycerate mutase.</title>
        <authorList>
            <person name="Muller P."/>
            <person name="Sawaya M.R."/>
            <person name="Pashkov I."/>
            <person name="Chan S."/>
            <person name="Nguyen C."/>
            <person name="Wu Y."/>
            <person name="Perry L.J."/>
            <person name="Eisenberg D."/>
        </authorList>
    </citation>
    <scope>X-RAY CRYSTALLOGRAPHY (1.70 ANGSTROMS) IN COMPLEX WITH SUBSTRATE ANALOG</scope>
    <scope>SUBUNIT</scope>
</reference>
<sequence length="249" mass="27216">MANTGSLVLLRHGESDWNALNLFTGWVDVGLTDKGQAEAVRSGELIAEHDLLPDVLYTSLLRRAITTAHLALDSADRLWIPVRRSWRLNERHYGALQGLDKAETKARYGEEQFMAWRRSYDTPPPPIERGSQFSQDADPRYADIGGGPLTECLADVVARFLPYFTDVIVGDLRVGKTVLIVAHGNSLRALVKHLDQMSDDEIVGLNIPTGIPLRYDLDSAMRPLVRGGTYLDPEAAAAGAAAVAGQGRG</sequence>